<proteinExistence type="inferred from homology"/>
<organism>
    <name type="scientific">Escherichia coli O127:H6 (strain E2348/69 / EPEC)</name>
    <dbReference type="NCBI Taxonomy" id="574521"/>
    <lineage>
        <taxon>Bacteria</taxon>
        <taxon>Pseudomonadati</taxon>
        <taxon>Pseudomonadota</taxon>
        <taxon>Gammaproteobacteria</taxon>
        <taxon>Enterobacterales</taxon>
        <taxon>Enterobacteriaceae</taxon>
        <taxon>Escherichia</taxon>
    </lineage>
</organism>
<gene>
    <name evidence="1" type="primary">lolB</name>
    <name type="ordered locus">E2348C_1332</name>
</gene>
<sequence>MPLPDFRLIRLLPLAALVLTACSVTTPKGPGKSPDSPQWRQHQQDVRNLNQYQTRGAFAYISDQQKVYARFFWQQTGQDRYRLLLTNPLGSTELELNAQPGNVQLVDNKGQRYTSDDAEEMIGKLTGMPIPLNSLRQWILGLPGDATDYKLDDQYRLSEITYSQNGKNWKVVYGGYDTKTQPAMPANMELTDGGQRIKLKMDNWVVK</sequence>
<accession>B7UQ97</accession>
<comment type="function">
    <text evidence="1">Plays a critical role in the incorporation of lipoproteins in the outer membrane after they are released by the LolA protein.</text>
</comment>
<comment type="subunit">
    <text evidence="1">Monomer.</text>
</comment>
<comment type="subcellular location">
    <subcellularLocation>
        <location evidence="1">Cell outer membrane</location>
        <topology evidence="1">Lipid-anchor</topology>
    </subcellularLocation>
</comment>
<comment type="similarity">
    <text evidence="1">Belongs to the LolB family.</text>
</comment>
<keyword id="KW-0998">Cell outer membrane</keyword>
<keyword id="KW-0143">Chaperone</keyword>
<keyword id="KW-0449">Lipoprotein</keyword>
<keyword id="KW-0472">Membrane</keyword>
<keyword id="KW-0564">Palmitate</keyword>
<keyword id="KW-0653">Protein transport</keyword>
<keyword id="KW-1185">Reference proteome</keyword>
<keyword id="KW-0732">Signal</keyword>
<keyword id="KW-0813">Transport</keyword>
<name>LOLB_ECO27</name>
<evidence type="ECO:0000255" key="1">
    <source>
        <dbReference type="HAMAP-Rule" id="MF_00233"/>
    </source>
</evidence>
<dbReference type="EMBL" id="FM180568">
    <property type="protein sequence ID" value="CAS08880.1"/>
    <property type="molecule type" value="Genomic_DNA"/>
</dbReference>
<dbReference type="RefSeq" id="WP_001130699.1">
    <property type="nucleotide sequence ID" value="NC_011601.1"/>
</dbReference>
<dbReference type="SMR" id="B7UQ97"/>
<dbReference type="KEGG" id="ecg:E2348C_1332"/>
<dbReference type="HOGENOM" id="CLU_092816_1_1_6"/>
<dbReference type="Proteomes" id="UP000008205">
    <property type="component" value="Chromosome"/>
</dbReference>
<dbReference type="GO" id="GO:0009279">
    <property type="term" value="C:cell outer membrane"/>
    <property type="evidence" value="ECO:0007669"/>
    <property type="project" value="UniProtKB-SubCell"/>
</dbReference>
<dbReference type="GO" id="GO:0044874">
    <property type="term" value="P:lipoprotein localization to outer membrane"/>
    <property type="evidence" value="ECO:0007669"/>
    <property type="project" value="UniProtKB-UniRule"/>
</dbReference>
<dbReference type="GO" id="GO:0015031">
    <property type="term" value="P:protein transport"/>
    <property type="evidence" value="ECO:0007669"/>
    <property type="project" value="UniProtKB-KW"/>
</dbReference>
<dbReference type="CDD" id="cd16326">
    <property type="entry name" value="LolB"/>
    <property type="match status" value="1"/>
</dbReference>
<dbReference type="FunFam" id="2.50.20.10:FF:000002">
    <property type="entry name" value="Outer-membrane lipoprotein LolB"/>
    <property type="match status" value="1"/>
</dbReference>
<dbReference type="Gene3D" id="2.50.20.10">
    <property type="entry name" value="Lipoprotein localisation LolA/LolB/LppX"/>
    <property type="match status" value="1"/>
</dbReference>
<dbReference type="HAMAP" id="MF_00233">
    <property type="entry name" value="LolB"/>
    <property type="match status" value="1"/>
</dbReference>
<dbReference type="InterPro" id="IPR029046">
    <property type="entry name" value="LolA/LolB/LppX"/>
</dbReference>
<dbReference type="InterPro" id="IPR004565">
    <property type="entry name" value="OM_lipoprot_LolB"/>
</dbReference>
<dbReference type="NCBIfam" id="TIGR00548">
    <property type="entry name" value="lolB"/>
    <property type="match status" value="1"/>
</dbReference>
<dbReference type="Pfam" id="PF03550">
    <property type="entry name" value="LolB"/>
    <property type="match status" value="1"/>
</dbReference>
<dbReference type="SUPFAM" id="SSF89392">
    <property type="entry name" value="Prokaryotic lipoproteins and lipoprotein localization factors"/>
    <property type="match status" value="1"/>
</dbReference>
<dbReference type="PROSITE" id="PS51257">
    <property type="entry name" value="PROKAR_LIPOPROTEIN"/>
    <property type="match status" value="1"/>
</dbReference>
<reference key="1">
    <citation type="journal article" date="2009" name="J. Bacteriol.">
        <title>Complete genome sequence and comparative genome analysis of enteropathogenic Escherichia coli O127:H6 strain E2348/69.</title>
        <authorList>
            <person name="Iguchi A."/>
            <person name="Thomson N.R."/>
            <person name="Ogura Y."/>
            <person name="Saunders D."/>
            <person name="Ooka T."/>
            <person name="Henderson I.R."/>
            <person name="Harris D."/>
            <person name="Asadulghani M."/>
            <person name="Kurokawa K."/>
            <person name="Dean P."/>
            <person name="Kenny B."/>
            <person name="Quail M.A."/>
            <person name="Thurston S."/>
            <person name="Dougan G."/>
            <person name="Hayashi T."/>
            <person name="Parkhill J."/>
            <person name="Frankel G."/>
        </authorList>
    </citation>
    <scope>NUCLEOTIDE SEQUENCE [LARGE SCALE GENOMIC DNA]</scope>
    <source>
        <strain>E2348/69 / EPEC</strain>
    </source>
</reference>
<protein>
    <recommendedName>
        <fullName evidence="1">Outer-membrane lipoprotein LolB</fullName>
    </recommendedName>
</protein>
<feature type="signal peptide" evidence="1">
    <location>
        <begin position="1"/>
        <end position="21"/>
    </location>
</feature>
<feature type="chain" id="PRO_1000190855" description="Outer-membrane lipoprotein LolB">
    <location>
        <begin position="22"/>
        <end position="207"/>
    </location>
</feature>
<feature type="lipid moiety-binding region" description="N-palmitoyl cysteine" evidence="1">
    <location>
        <position position="22"/>
    </location>
</feature>
<feature type="lipid moiety-binding region" description="S-diacylglycerol cysteine" evidence="1">
    <location>
        <position position="22"/>
    </location>
</feature>